<accession>B9DNS1</accession>
<feature type="chain" id="PRO_1000123805" description="Arginine repressor">
    <location>
        <begin position="1"/>
        <end position="150"/>
    </location>
</feature>
<protein>
    <recommendedName>
        <fullName evidence="1">Arginine repressor</fullName>
    </recommendedName>
</protein>
<name>ARGR_STACT</name>
<keyword id="KW-0028">Amino-acid biosynthesis</keyword>
<keyword id="KW-0055">Arginine biosynthesis</keyword>
<keyword id="KW-0963">Cytoplasm</keyword>
<keyword id="KW-0238">DNA-binding</keyword>
<keyword id="KW-1185">Reference proteome</keyword>
<keyword id="KW-0678">Repressor</keyword>
<keyword id="KW-0804">Transcription</keyword>
<keyword id="KW-0805">Transcription regulation</keyword>
<evidence type="ECO:0000255" key="1">
    <source>
        <dbReference type="HAMAP-Rule" id="MF_00173"/>
    </source>
</evidence>
<sequence>MAKKSVRHIKIREIISTEQVETQDELVRRLNQFDLNVTQATVSRDIKELQLIKVPAPTGQYIYSLPNDRKYHPLEKLGRYLMDSFVNIEGTGNLLVLKTLPGNAQSIGAILDQIDWEEVLGTICGDDTCLLICHDEESANAIKTRIFNLL</sequence>
<organism>
    <name type="scientific">Staphylococcus carnosus (strain TM300)</name>
    <dbReference type="NCBI Taxonomy" id="396513"/>
    <lineage>
        <taxon>Bacteria</taxon>
        <taxon>Bacillati</taxon>
        <taxon>Bacillota</taxon>
        <taxon>Bacilli</taxon>
        <taxon>Bacillales</taxon>
        <taxon>Staphylococcaceae</taxon>
        <taxon>Staphylococcus</taxon>
    </lineage>
</organism>
<dbReference type="EMBL" id="AM295250">
    <property type="protein sequence ID" value="CAL28052.1"/>
    <property type="molecule type" value="Genomic_DNA"/>
</dbReference>
<dbReference type="RefSeq" id="WP_015900393.1">
    <property type="nucleotide sequence ID" value="NC_012121.1"/>
</dbReference>
<dbReference type="SMR" id="B9DNS1"/>
<dbReference type="GeneID" id="93793569"/>
<dbReference type="KEGG" id="sca:SCA_1144"/>
<dbReference type="eggNOG" id="COG1438">
    <property type="taxonomic scope" value="Bacteria"/>
</dbReference>
<dbReference type="HOGENOM" id="CLU_097103_3_0_9"/>
<dbReference type="OrthoDB" id="9807089at2"/>
<dbReference type="BioCyc" id="SCAR396513:SCA_RS05730-MONOMER"/>
<dbReference type="UniPathway" id="UPA00068"/>
<dbReference type="Proteomes" id="UP000000444">
    <property type="component" value="Chromosome"/>
</dbReference>
<dbReference type="GO" id="GO:0005737">
    <property type="term" value="C:cytoplasm"/>
    <property type="evidence" value="ECO:0007669"/>
    <property type="project" value="UniProtKB-SubCell"/>
</dbReference>
<dbReference type="GO" id="GO:0034618">
    <property type="term" value="F:arginine binding"/>
    <property type="evidence" value="ECO:0007669"/>
    <property type="project" value="InterPro"/>
</dbReference>
<dbReference type="GO" id="GO:0003677">
    <property type="term" value="F:DNA binding"/>
    <property type="evidence" value="ECO:0007669"/>
    <property type="project" value="UniProtKB-KW"/>
</dbReference>
<dbReference type="GO" id="GO:0003700">
    <property type="term" value="F:DNA-binding transcription factor activity"/>
    <property type="evidence" value="ECO:0007669"/>
    <property type="project" value="UniProtKB-UniRule"/>
</dbReference>
<dbReference type="GO" id="GO:0006526">
    <property type="term" value="P:L-arginine biosynthetic process"/>
    <property type="evidence" value="ECO:0007669"/>
    <property type="project" value="UniProtKB-UniPathway"/>
</dbReference>
<dbReference type="GO" id="GO:0051259">
    <property type="term" value="P:protein complex oligomerization"/>
    <property type="evidence" value="ECO:0007669"/>
    <property type="project" value="InterPro"/>
</dbReference>
<dbReference type="GO" id="GO:1900079">
    <property type="term" value="P:regulation of arginine biosynthetic process"/>
    <property type="evidence" value="ECO:0007669"/>
    <property type="project" value="UniProtKB-UniRule"/>
</dbReference>
<dbReference type="Gene3D" id="3.30.1360.40">
    <property type="match status" value="1"/>
</dbReference>
<dbReference type="Gene3D" id="1.10.10.10">
    <property type="entry name" value="Winged helix-like DNA-binding domain superfamily/Winged helix DNA-binding domain"/>
    <property type="match status" value="1"/>
</dbReference>
<dbReference type="HAMAP" id="MF_00173">
    <property type="entry name" value="Arg_repressor"/>
    <property type="match status" value="1"/>
</dbReference>
<dbReference type="InterPro" id="IPR001669">
    <property type="entry name" value="Arg_repress"/>
</dbReference>
<dbReference type="InterPro" id="IPR020899">
    <property type="entry name" value="Arg_repress_C"/>
</dbReference>
<dbReference type="InterPro" id="IPR036251">
    <property type="entry name" value="Arg_repress_C_sf"/>
</dbReference>
<dbReference type="InterPro" id="IPR020900">
    <property type="entry name" value="Arg_repress_DNA-bd"/>
</dbReference>
<dbReference type="InterPro" id="IPR036388">
    <property type="entry name" value="WH-like_DNA-bd_sf"/>
</dbReference>
<dbReference type="InterPro" id="IPR036390">
    <property type="entry name" value="WH_DNA-bd_sf"/>
</dbReference>
<dbReference type="NCBIfam" id="TIGR01529">
    <property type="entry name" value="argR_whole"/>
    <property type="match status" value="1"/>
</dbReference>
<dbReference type="NCBIfam" id="NF003281">
    <property type="entry name" value="PRK04280.1"/>
    <property type="match status" value="1"/>
</dbReference>
<dbReference type="PANTHER" id="PTHR34471">
    <property type="entry name" value="ARGININE REPRESSOR"/>
    <property type="match status" value="1"/>
</dbReference>
<dbReference type="PANTHER" id="PTHR34471:SF1">
    <property type="entry name" value="ARGININE REPRESSOR"/>
    <property type="match status" value="1"/>
</dbReference>
<dbReference type="Pfam" id="PF01316">
    <property type="entry name" value="Arg_repressor"/>
    <property type="match status" value="1"/>
</dbReference>
<dbReference type="Pfam" id="PF02863">
    <property type="entry name" value="Arg_repressor_C"/>
    <property type="match status" value="1"/>
</dbReference>
<dbReference type="PRINTS" id="PR01467">
    <property type="entry name" value="ARGREPRESSOR"/>
</dbReference>
<dbReference type="SUPFAM" id="SSF55252">
    <property type="entry name" value="C-terminal domain of arginine repressor"/>
    <property type="match status" value="1"/>
</dbReference>
<dbReference type="SUPFAM" id="SSF46785">
    <property type="entry name" value="Winged helix' DNA-binding domain"/>
    <property type="match status" value="1"/>
</dbReference>
<comment type="function">
    <text evidence="1">Regulates arginine biosynthesis genes.</text>
</comment>
<comment type="pathway">
    <text>Amino-acid biosynthesis; L-arginine biosynthesis [regulation].</text>
</comment>
<comment type="subcellular location">
    <subcellularLocation>
        <location evidence="1">Cytoplasm</location>
    </subcellularLocation>
</comment>
<comment type="similarity">
    <text evidence="1">Belongs to the ArgR family.</text>
</comment>
<reference key="1">
    <citation type="journal article" date="2009" name="Appl. Environ. Microbiol.">
        <title>Genome analysis of the meat starter culture bacterium Staphylococcus carnosus TM300.</title>
        <authorList>
            <person name="Rosenstein R."/>
            <person name="Nerz C."/>
            <person name="Biswas L."/>
            <person name="Resch A."/>
            <person name="Raddatz G."/>
            <person name="Schuster S.C."/>
            <person name="Goetz F."/>
        </authorList>
    </citation>
    <scope>NUCLEOTIDE SEQUENCE [LARGE SCALE GENOMIC DNA]</scope>
    <source>
        <strain>TM300</strain>
    </source>
</reference>
<gene>
    <name evidence="1" type="primary">argR</name>
    <name type="ordered locus">Sca_1144</name>
</gene>
<proteinExistence type="inferred from homology"/>